<sequence length="909" mass="103709">MGVFESIFGSANKKELKKIEPIIKKIESYDKSMQQLSDDELKHKTVEFKERLKNGETLDDILPEAFAVVREASYRVLGMKQYRVQLIGGVVLHQGRIAEMKTGEGKTLVATLPAYLNALSGKGVHVVTVNDYLAKRDKEWMGKVHEFLGLTVGVIVYGLDNDERRENYACDITYGTNNQYGFDYLRDNMVIYKKDKVQRGLNFAIVDEVDSILIDEARTPLIISGQGDESTDMYMRANMFANGLTGRIMDPEEDKPDIFDREFKDETVDFLVDEKRKTASLTEVGTRKAEEYFGVENLSDPNNMELAHHINQALKANNTMKRDIDYVVKDDEILIVDEFTGRIMEGRRYSDGLHQAIEAKEGVEVKSESKTLATVTFQNYFRMYNKLSGMTGTAKTEEAEFNEIYKMDVVEIPTNKPVARVDEQDRVYINENAKFNAIVEEIKEIHKTGQPILVGTISIEVSERLSNLLKKNGIKHDVLNAKQHEREAEIVAQAGMFDKVTIATNMAGRGTDILLGGNPDFMAKHDMKKQGYGDYVIESLDSFLPSTDEELVAARNVYNELHKKYKKMTDENKKKVLEVGGLYIIGTERHESRRIDNQLRGRSGRQGDPGRSRFFVSLGDNLMRLFGGETIQKYAESGKFPEDEPMEFRTITKAIERAQTKVESNNFGIRKNVLKYDDVMNAQRKVIYTERDKVLDGEDMHESIVAMIKDIISNAIDTYCQDPKSENWEMEALMTYLNTFIPEGTLDLTRLNSYNKKTFTDYVIQKALEVYNAKEEAIGKEKFREIERVILLMVVDRKWMDHIDAMDQLRQGIGLRAFGQQDPVRAYNNEGFEMFEDMNHSIKEDTVRGMFNVQPVEEIERKQVAHETSATGGEEEINKPVVKGKKIGRNDPCPCGSGKKYKNCCGKNR</sequence>
<protein>
    <recommendedName>
        <fullName evidence="1">Protein translocase subunit SecA</fullName>
        <ecNumber evidence="1">7.4.2.8</ecNumber>
    </recommendedName>
</protein>
<dbReference type="EC" id="7.4.2.8" evidence="1"/>
<dbReference type="EMBL" id="AP008971">
    <property type="protein sequence ID" value="BAG08949.1"/>
    <property type="molecule type" value="Genomic_DNA"/>
</dbReference>
<dbReference type="RefSeq" id="WP_002840721.1">
    <property type="nucleotide sequence ID" value="NC_010376.1"/>
</dbReference>
<dbReference type="SMR" id="B0S3K9"/>
<dbReference type="STRING" id="334413.FMG_1531"/>
<dbReference type="KEGG" id="fma:FMG_1531"/>
<dbReference type="eggNOG" id="COG0653">
    <property type="taxonomic scope" value="Bacteria"/>
</dbReference>
<dbReference type="HOGENOM" id="CLU_005314_3_0_9"/>
<dbReference type="Proteomes" id="UP000001319">
    <property type="component" value="Chromosome"/>
</dbReference>
<dbReference type="GO" id="GO:0031522">
    <property type="term" value="C:cell envelope Sec protein transport complex"/>
    <property type="evidence" value="ECO:0007669"/>
    <property type="project" value="TreeGrafter"/>
</dbReference>
<dbReference type="GO" id="GO:0005829">
    <property type="term" value="C:cytosol"/>
    <property type="evidence" value="ECO:0007669"/>
    <property type="project" value="TreeGrafter"/>
</dbReference>
<dbReference type="GO" id="GO:0005886">
    <property type="term" value="C:plasma membrane"/>
    <property type="evidence" value="ECO:0007669"/>
    <property type="project" value="UniProtKB-SubCell"/>
</dbReference>
<dbReference type="GO" id="GO:0005524">
    <property type="term" value="F:ATP binding"/>
    <property type="evidence" value="ECO:0007669"/>
    <property type="project" value="UniProtKB-UniRule"/>
</dbReference>
<dbReference type="GO" id="GO:0046872">
    <property type="term" value="F:metal ion binding"/>
    <property type="evidence" value="ECO:0007669"/>
    <property type="project" value="UniProtKB-KW"/>
</dbReference>
<dbReference type="GO" id="GO:0008564">
    <property type="term" value="F:protein-exporting ATPase activity"/>
    <property type="evidence" value="ECO:0007669"/>
    <property type="project" value="UniProtKB-EC"/>
</dbReference>
<dbReference type="GO" id="GO:0065002">
    <property type="term" value="P:intracellular protein transmembrane transport"/>
    <property type="evidence" value="ECO:0007669"/>
    <property type="project" value="UniProtKB-UniRule"/>
</dbReference>
<dbReference type="GO" id="GO:0017038">
    <property type="term" value="P:protein import"/>
    <property type="evidence" value="ECO:0007669"/>
    <property type="project" value="InterPro"/>
</dbReference>
<dbReference type="GO" id="GO:0006605">
    <property type="term" value="P:protein targeting"/>
    <property type="evidence" value="ECO:0007669"/>
    <property type="project" value="UniProtKB-UniRule"/>
</dbReference>
<dbReference type="GO" id="GO:0043952">
    <property type="term" value="P:protein transport by the Sec complex"/>
    <property type="evidence" value="ECO:0007669"/>
    <property type="project" value="TreeGrafter"/>
</dbReference>
<dbReference type="CDD" id="cd17928">
    <property type="entry name" value="DEXDc_SecA"/>
    <property type="match status" value="1"/>
</dbReference>
<dbReference type="CDD" id="cd18803">
    <property type="entry name" value="SF2_C_secA"/>
    <property type="match status" value="1"/>
</dbReference>
<dbReference type="FunFam" id="1.10.3060.10:FF:000002">
    <property type="entry name" value="Preprotein translocase subunit SecA"/>
    <property type="match status" value="1"/>
</dbReference>
<dbReference type="FunFam" id="3.40.50.300:FF:000113">
    <property type="entry name" value="Preprotein translocase subunit SecA"/>
    <property type="match status" value="1"/>
</dbReference>
<dbReference type="FunFam" id="3.90.1440.10:FF:000001">
    <property type="entry name" value="Preprotein translocase subunit SecA"/>
    <property type="match status" value="1"/>
</dbReference>
<dbReference type="FunFam" id="3.40.50.300:FF:000334">
    <property type="entry name" value="Protein translocase subunit SecA"/>
    <property type="match status" value="1"/>
</dbReference>
<dbReference type="Gene3D" id="1.10.3060.10">
    <property type="entry name" value="Helical scaffold and wing domains of SecA"/>
    <property type="match status" value="1"/>
</dbReference>
<dbReference type="Gene3D" id="3.40.50.300">
    <property type="entry name" value="P-loop containing nucleotide triphosphate hydrolases"/>
    <property type="match status" value="2"/>
</dbReference>
<dbReference type="Gene3D" id="3.90.1440.10">
    <property type="entry name" value="SecA, preprotein cross-linking domain"/>
    <property type="match status" value="1"/>
</dbReference>
<dbReference type="HAMAP" id="MF_01382">
    <property type="entry name" value="SecA"/>
    <property type="match status" value="1"/>
</dbReference>
<dbReference type="InterPro" id="IPR014001">
    <property type="entry name" value="Helicase_ATP-bd"/>
</dbReference>
<dbReference type="InterPro" id="IPR027417">
    <property type="entry name" value="P-loop_NTPase"/>
</dbReference>
<dbReference type="InterPro" id="IPR004027">
    <property type="entry name" value="SEC_C_motif"/>
</dbReference>
<dbReference type="InterPro" id="IPR000185">
    <property type="entry name" value="SecA"/>
</dbReference>
<dbReference type="InterPro" id="IPR020937">
    <property type="entry name" value="SecA_CS"/>
</dbReference>
<dbReference type="InterPro" id="IPR011115">
    <property type="entry name" value="SecA_DEAD"/>
</dbReference>
<dbReference type="InterPro" id="IPR014018">
    <property type="entry name" value="SecA_motor_DEAD"/>
</dbReference>
<dbReference type="InterPro" id="IPR011130">
    <property type="entry name" value="SecA_preprotein_X-link_dom"/>
</dbReference>
<dbReference type="InterPro" id="IPR044722">
    <property type="entry name" value="SecA_SF2_C"/>
</dbReference>
<dbReference type="InterPro" id="IPR011116">
    <property type="entry name" value="SecA_Wing/Scaffold"/>
</dbReference>
<dbReference type="InterPro" id="IPR036266">
    <property type="entry name" value="SecA_Wing/Scaffold_sf"/>
</dbReference>
<dbReference type="InterPro" id="IPR036670">
    <property type="entry name" value="SecA_X-link_sf"/>
</dbReference>
<dbReference type="NCBIfam" id="NF009538">
    <property type="entry name" value="PRK12904.1"/>
    <property type="match status" value="1"/>
</dbReference>
<dbReference type="NCBIfam" id="TIGR00963">
    <property type="entry name" value="secA"/>
    <property type="match status" value="1"/>
</dbReference>
<dbReference type="PANTHER" id="PTHR30612:SF0">
    <property type="entry name" value="CHLOROPLAST PROTEIN-TRANSPORTING ATPASE"/>
    <property type="match status" value="1"/>
</dbReference>
<dbReference type="PANTHER" id="PTHR30612">
    <property type="entry name" value="SECA INNER MEMBRANE COMPONENT OF SEC PROTEIN SECRETION SYSTEM"/>
    <property type="match status" value="1"/>
</dbReference>
<dbReference type="Pfam" id="PF21090">
    <property type="entry name" value="P-loop_SecA"/>
    <property type="match status" value="1"/>
</dbReference>
<dbReference type="Pfam" id="PF02810">
    <property type="entry name" value="SEC-C"/>
    <property type="match status" value="1"/>
</dbReference>
<dbReference type="Pfam" id="PF07517">
    <property type="entry name" value="SecA_DEAD"/>
    <property type="match status" value="1"/>
</dbReference>
<dbReference type="Pfam" id="PF01043">
    <property type="entry name" value="SecA_PP_bind"/>
    <property type="match status" value="1"/>
</dbReference>
<dbReference type="Pfam" id="PF07516">
    <property type="entry name" value="SecA_SW"/>
    <property type="match status" value="1"/>
</dbReference>
<dbReference type="PRINTS" id="PR00906">
    <property type="entry name" value="SECA"/>
</dbReference>
<dbReference type="SMART" id="SM00957">
    <property type="entry name" value="SecA_DEAD"/>
    <property type="match status" value="1"/>
</dbReference>
<dbReference type="SMART" id="SM00958">
    <property type="entry name" value="SecA_PP_bind"/>
    <property type="match status" value="1"/>
</dbReference>
<dbReference type="SUPFAM" id="SSF81886">
    <property type="entry name" value="Helical scaffold and wing domains of SecA"/>
    <property type="match status" value="1"/>
</dbReference>
<dbReference type="SUPFAM" id="SSF52540">
    <property type="entry name" value="P-loop containing nucleoside triphosphate hydrolases"/>
    <property type="match status" value="2"/>
</dbReference>
<dbReference type="SUPFAM" id="SSF81767">
    <property type="entry name" value="Pre-protein crosslinking domain of SecA"/>
    <property type="match status" value="1"/>
</dbReference>
<dbReference type="PROSITE" id="PS01312">
    <property type="entry name" value="SECA"/>
    <property type="match status" value="1"/>
</dbReference>
<dbReference type="PROSITE" id="PS51196">
    <property type="entry name" value="SECA_MOTOR_DEAD"/>
    <property type="match status" value="1"/>
</dbReference>
<name>SECA_FINM2</name>
<comment type="function">
    <text evidence="1">Part of the Sec protein translocase complex. Interacts with the SecYEG preprotein conducting channel. Has a central role in coupling the hydrolysis of ATP to the transfer of proteins into and across the cell membrane, serving as an ATP-driven molecular motor driving the stepwise translocation of polypeptide chains across the membrane.</text>
</comment>
<comment type="catalytic activity">
    <reaction evidence="1">
        <text>ATP + H2O + cellular proteinSide 1 = ADP + phosphate + cellular proteinSide 2.</text>
        <dbReference type="EC" id="7.4.2.8"/>
    </reaction>
</comment>
<comment type="cofactor">
    <cofactor evidence="1">
        <name>Zn(2+)</name>
        <dbReference type="ChEBI" id="CHEBI:29105"/>
    </cofactor>
    <text evidence="1">May bind 1 zinc ion per subunit.</text>
</comment>
<comment type="subunit">
    <text evidence="1">Monomer and homodimer. Part of the essential Sec protein translocation apparatus which comprises SecA, SecYEG and auxiliary proteins SecDF. Other proteins may also be involved.</text>
</comment>
<comment type="subcellular location">
    <subcellularLocation>
        <location evidence="1">Cell membrane</location>
        <topology evidence="1">Peripheral membrane protein</topology>
        <orientation evidence="1">Cytoplasmic side</orientation>
    </subcellularLocation>
    <subcellularLocation>
        <location evidence="1">Cytoplasm</location>
    </subcellularLocation>
    <text evidence="1">Distribution is 50-50.</text>
</comment>
<comment type="similarity">
    <text evidence="1">Belongs to the SecA family.</text>
</comment>
<evidence type="ECO:0000255" key="1">
    <source>
        <dbReference type="HAMAP-Rule" id="MF_01382"/>
    </source>
</evidence>
<evidence type="ECO:0000256" key="2">
    <source>
        <dbReference type="SAM" id="MobiDB-lite"/>
    </source>
</evidence>
<proteinExistence type="inferred from homology"/>
<keyword id="KW-0067">ATP-binding</keyword>
<keyword id="KW-1003">Cell membrane</keyword>
<keyword id="KW-0963">Cytoplasm</keyword>
<keyword id="KW-0472">Membrane</keyword>
<keyword id="KW-0479">Metal-binding</keyword>
<keyword id="KW-0547">Nucleotide-binding</keyword>
<keyword id="KW-0653">Protein transport</keyword>
<keyword id="KW-1185">Reference proteome</keyword>
<keyword id="KW-1278">Translocase</keyword>
<keyword id="KW-0811">Translocation</keyword>
<keyword id="KW-0813">Transport</keyword>
<keyword id="KW-0862">Zinc</keyword>
<gene>
    <name evidence="1" type="primary">secA</name>
    <name type="ordered locus">FMG_1531</name>
</gene>
<feature type="chain" id="PRO_1000145015" description="Protein translocase subunit SecA">
    <location>
        <begin position="1"/>
        <end position="909"/>
    </location>
</feature>
<feature type="region of interest" description="Disordered" evidence="2">
    <location>
        <begin position="866"/>
        <end position="899"/>
    </location>
</feature>
<feature type="binding site" evidence="1">
    <location>
        <position position="85"/>
    </location>
    <ligand>
        <name>ATP</name>
        <dbReference type="ChEBI" id="CHEBI:30616"/>
    </ligand>
</feature>
<feature type="binding site" evidence="1">
    <location>
        <begin position="103"/>
        <end position="107"/>
    </location>
    <ligand>
        <name>ATP</name>
        <dbReference type="ChEBI" id="CHEBI:30616"/>
    </ligand>
</feature>
<feature type="binding site" evidence="1">
    <location>
        <position position="512"/>
    </location>
    <ligand>
        <name>ATP</name>
        <dbReference type="ChEBI" id="CHEBI:30616"/>
    </ligand>
</feature>
<feature type="binding site" evidence="1">
    <location>
        <position position="893"/>
    </location>
    <ligand>
        <name>Zn(2+)</name>
        <dbReference type="ChEBI" id="CHEBI:29105"/>
    </ligand>
</feature>
<feature type="binding site" evidence="1">
    <location>
        <position position="895"/>
    </location>
    <ligand>
        <name>Zn(2+)</name>
        <dbReference type="ChEBI" id="CHEBI:29105"/>
    </ligand>
</feature>
<feature type="binding site" evidence="1">
    <location>
        <position position="904"/>
    </location>
    <ligand>
        <name>Zn(2+)</name>
        <dbReference type="ChEBI" id="CHEBI:29105"/>
    </ligand>
</feature>
<feature type="binding site" evidence="1">
    <location>
        <position position="905"/>
    </location>
    <ligand>
        <name>Zn(2+)</name>
        <dbReference type="ChEBI" id="CHEBI:29105"/>
    </ligand>
</feature>
<accession>B0S3K9</accession>
<reference key="1">
    <citation type="journal article" date="2008" name="DNA Res.">
        <title>Complete genome sequence of Finegoldia magna, an anaerobic opportunistic pathogen.</title>
        <authorList>
            <person name="Goto T."/>
            <person name="Yamashita A."/>
            <person name="Hirakawa H."/>
            <person name="Matsutani M."/>
            <person name="Todo K."/>
            <person name="Ohshima K."/>
            <person name="Toh H."/>
            <person name="Miyamoto K."/>
            <person name="Kuhara S."/>
            <person name="Hattori M."/>
            <person name="Shimizu T."/>
            <person name="Akimoto S."/>
        </authorList>
    </citation>
    <scope>NUCLEOTIDE SEQUENCE [LARGE SCALE GENOMIC DNA]</scope>
    <source>
        <strain>ATCC 29328 / DSM 20472 / WAL 2508</strain>
    </source>
</reference>
<organism>
    <name type="scientific">Finegoldia magna (strain ATCC 29328 / DSM 20472 / WAL 2508)</name>
    <name type="common">Peptostreptococcus magnus</name>
    <dbReference type="NCBI Taxonomy" id="334413"/>
    <lineage>
        <taxon>Bacteria</taxon>
        <taxon>Bacillati</taxon>
        <taxon>Bacillota</taxon>
        <taxon>Tissierellia</taxon>
        <taxon>Tissierellales</taxon>
        <taxon>Peptoniphilaceae</taxon>
        <taxon>Finegoldia</taxon>
    </lineage>
</organism>